<proteinExistence type="inferred from homology"/>
<gene>
    <name type="primary">hemC</name>
    <name type="ordered locus">ML2421</name>
    <name type="ORF">B2168_C1_179</name>
    <name type="ORF">B2168_C3_262</name>
</gene>
<sequence length="315" mass="32523">MIRIGTRGSLLATTQAALVRDALIANGHPAELVIVNTAGDQSSASIDSLGVGVFTTALRAAIEEGCVDAAVHSYKDLPTADDPRFTVAAIPPRNDPRDAVVTRDELVLAELPAGSLVGTSSPRRAAQLRALGLGLEIRPLRGNLDTRLNRVSSGDLDAIVVARAGLARLGRLDEVTETLDPVQMVPAPAQGAIAVECRAGDSRLVAVLAALDDADTRAAVTAERVLLAELEAGCSAPVGAIAQVVESIDGEGRVFEELSLRGCVAALDGSDVIRASGISTSGRASELGLAVAVELFELGARELMWGARSDRARGS</sequence>
<comment type="function">
    <text evidence="1">Tetrapolymerization of the monopyrrole PBG into the hydroxymethylbilane pre-uroporphyrinogen in several discrete steps.</text>
</comment>
<comment type="catalytic activity">
    <reaction>
        <text>4 porphobilinogen + H2O = hydroxymethylbilane + 4 NH4(+)</text>
        <dbReference type="Rhea" id="RHEA:13185"/>
        <dbReference type="ChEBI" id="CHEBI:15377"/>
        <dbReference type="ChEBI" id="CHEBI:28938"/>
        <dbReference type="ChEBI" id="CHEBI:57845"/>
        <dbReference type="ChEBI" id="CHEBI:58126"/>
        <dbReference type="EC" id="2.5.1.61"/>
    </reaction>
</comment>
<comment type="cofactor">
    <cofactor evidence="1">
        <name>dipyrromethane</name>
        <dbReference type="ChEBI" id="CHEBI:60342"/>
    </cofactor>
    <text evidence="1">Binds 1 dipyrromethane group covalently.</text>
</comment>
<comment type="pathway">
    <text>Porphyrin-containing compound metabolism; protoporphyrin-IX biosynthesis; coproporphyrinogen-III from 5-aminolevulinate: step 2/4.</text>
</comment>
<comment type="subunit">
    <text evidence="1">Monomer.</text>
</comment>
<comment type="miscellaneous">
    <text evidence="1">The porphobilinogen subunits are added to the dipyrromethane group.</text>
</comment>
<comment type="similarity">
    <text evidence="2">Belongs to the HMBS family.</text>
</comment>
<comment type="sequence caution" evidence="2">
    <conflict type="erroneous initiation">
        <sequence resource="EMBL-CDS" id="AAA17244"/>
    </conflict>
</comment>
<comment type="sequence caution" evidence="2">
    <conflict type="erroneous initiation">
        <sequence resource="EMBL-CDS" id="CAC31937"/>
    </conflict>
</comment>
<organism>
    <name type="scientific">Mycobacterium leprae (strain TN)</name>
    <dbReference type="NCBI Taxonomy" id="272631"/>
    <lineage>
        <taxon>Bacteria</taxon>
        <taxon>Bacillati</taxon>
        <taxon>Actinomycetota</taxon>
        <taxon>Actinomycetes</taxon>
        <taxon>Mycobacteriales</taxon>
        <taxon>Mycobacteriaceae</taxon>
        <taxon>Mycobacterium</taxon>
    </lineage>
</organism>
<protein>
    <recommendedName>
        <fullName>Porphobilinogen deaminase</fullName>
        <shortName>PBG</shortName>
        <ecNumber>2.5.1.61</ecNumber>
    </recommendedName>
    <alternativeName>
        <fullName>Hydroxymethylbilane synthase</fullName>
        <shortName>HMBS</shortName>
    </alternativeName>
    <alternativeName>
        <fullName>Pre-uroporphyrinogen synthase</fullName>
    </alternativeName>
</protein>
<dbReference type="EC" id="2.5.1.61"/>
<dbReference type="EMBL" id="U00018">
    <property type="protein sequence ID" value="AAA17223.1"/>
    <property type="molecule type" value="Genomic_DNA"/>
</dbReference>
<dbReference type="EMBL" id="U00018">
    <property type="protein sequence ID" value="AAA17244.1"/>
    <property type="status" value="ALT_INIT"/>
    <property type="molecule type" value="Genomic_DNA"/>
</dbReference>
<dbReference type="EMBL" id="AL583925">
    <property type="protein sequence ID" value="CAC31937.1"/>
    <property type="status" value="ALT_INIT"/>
    <property type="molecule type" value="Genomic_DNA"/>
</dbReference>
<dbReference type="PIR" id="A87212">
    <property type="entry name" value="A87212"/>
</dbReference>
<dbReference type="PIR" id="S72887">
    <property type="entry name" value="S72887"/>
</dbReference>
<dbReference type="PIR" id="S72908">
    <property type="entry name" value="S72908"/>
</dbReference>
<dbReference type="RefSeq" id="WP_041323398.1">
    <property type="nucleotide sequence ID" value="NC_002677.1"/>
</dbReference>
<dbReference type="SMR" id="Q49808"/>
<dbReference type="STRING" id="272631.gene:17576283"/>
<dbReference type="KEGG" id="mle:ML2421"/>
<dbReference type="Leproma" id="ML2421"/>
<dbReference type="eggNOG" id="COG0181">
    <property type="taxonomic scope" value="Bacteria"/>
</dbReference>
<dbReference type="HOGENOM" id="CLU_019704_1_0_11"/>
<dbReference type="UniPathway" id="UPA00251">
    <property type="reaction ID" value="UER00319"/>
</dbReference>
<dbReference type="Proteomes" id="UP000000806">
    <property type="component" value="Chromosome"/>
</dbReference>
<dbReference type="GO" id="GO:0005737">
    <property type="term" value="C:cytoplasm"/>
    <property type="evidence" value="ECO:0007669"/>
    <property type="project" value="TreeGrafter"/>
</dbReference>
<dbReference type="GO" id="GO:0004418">
    <property type="term" value="F:hydroxymethylbilane synthase activity"/>
    <property type="evidence" value="ECO:0007669"/>
    <property type="project" value="UniProtKB-UniRule"/>
</dbReference>
<dbReference type="GO" id="GO:0006782">
    <property type="term" value="P:protoporphyrinogen IX biosynthetic process"/>
    <property type="evidence" value="ECO:0007669"/>
    <property type="project" value="UniProtKB-UniRule"/>
</dbReference>
<dbReference type="FunFam" id="3.30.160.40:FF:000001">
    <property type="entry name" value="Porphobilinogen deaminase"/>
    <property type="match status" value="1"/>
</dbReference>
<dbReference type="FunFam" id="3.40.190.10:FF:000005">
    <property type="entry name" value="Porphobilinogen deaminase"/>
    <property type="match status" value="1"/>
</dbReference>
<dbReference type="Gene3D" id="3.40.190.10">
    <property type="entry name" value="Periplasmic binding protein-like II"/>
    <property type="match status" value="2"/>
</dbReference>
<dbReference type="Gene3D" id="3.30.160.40">
    <property type="entry name" value="Porphobilinogen deaminase, C-terminal domain"/>
    <property type="match status" value="1"/>
</dbReference>
<dbReference type="HAMAP" id="MF_00260">
    <property type="entry name" value="Porphobil_deam"/>
    <property type="match status" value="1"/>
</dbReference>
<dbReference type="InterPro" id="IPR000860">
    <property type="entry name" value="HemC"/>
</dbReference>
<dbReference type="InterPro" id="IPR022419">
    <property type="entry name" value="Porphobilin_deaminase_cofac_BS"/>
</dbReference>
<dbReference type="InterPro" id="IPR022417">
    <property type="entry name" value="Porphobilin_deaminase_N"/>
</dbReference>
<dbReference type="InterPro" id="IPR022418">
    <property type="entry name" value="Porphobilinogen_deaminase_C"/>
</dbReference>
<dbReference type="InterPro" id="IPR036803">
    <property type="entry name" value="Porphobilinogen_deaminase_C_sf"/>
</dbReference>
<dbReference type="NCBIfam" id="TIGR00212">
    <property type="entry name" value="hemC"/>
    <property type="match status" value="1"/>
</dbReference>
<dbReference type="PANTHER" id="PTHR11557">
    <property type="entry name" value="PORPHOBILINOGEN DEAMINASE"/>
    <property type="match status" value="1"/>
</dbReference>
<dbReference type="PANTHER" id="PTHR11557:SF0">
    <property type="entry name" value="PORPHOBILINOGEN DEAMINASE"/>
    <property type="match status" value="1"/>
</dbReference>
<dbReference type="Pfam" id="PF01379">
    <property type="entry name" value="Porphobil_deam"/>
    <property type="match status" value="1"/>
</dbReference>
<dbReference type="Pfam" id="PF03900">
    <property type="entry name" value="Porphobil_deamC"/>
    <property type="match status" value="1"/>
</dbReference>
<dbReference type="PIRSF" id="PIRSF001438">
    <property type="entry name" value="4pyrrol_synth_OHMeBilane_synth"/>
    <property type="match status" value="1"/>
</dbReference>
<dbReference type="PRINTS" id="PR00151">
    <property type="entry name" value="PORPHBDMNASE"/>
</dbReference>
<dbReference type="SUPFAM" id="SSF53850">
    <property type="entry name" value="Periplasmic binding protein-like II"/>
    <property type="match status" value="1"/>
</dbReference>
<dbReference type="SUPFAM" id="SSF54782">
    <property type="entry name" value="Porphobilinogen deaminase (hydroxymethylbilane synthase), C-terminal domain"/>
    <property type="match status" value="1"/>
</dbReference>
<dbReference type="PROSITE" id="PS00533">
    <property type="entry name" value="PORPHOBILINOGEN_DEAM"/>
    <property type="match status" value="1"/>
</dbReference>
<feature type="chain" id="PRO_0000142958" description="Porphobilinogen deaminase">
    <location>
        <begin position="1"/>
        <end position="315"/>
    </location>
</feature>
<feature type="modified residue" description="S-(dipyrrolylmethanemethyl)cysteine" evidence="1">
    <location>
        <position position="234"/>
    </location>
</feature>
<feature type="sequence conflict" description="In Ref. 1; AAA17223." evidence="2" ref="1">
    <original>L</original>
    <variation>P</variation>
    <location>
        <position position="169"/>
    </location>
</feature>
<name>HEM3_MYCLE</name>
<evidence type="ECO:0000250" key="1"/>
<evidence type="ECO:0000305" key="2"/>
<accession>Q49808</accession>
<accession>Q49818</accession>
<accession>Q9CB59</accession>
<keyword id="KW-0627">Porphyrin biosynthesis</keyword>
<keyword id="KW-1185">Reference proteome</keyword>
<keyword id="KW-0808">Transferase</keyword>
<reference key="1">
    <citation type="submission" date="1994-03" db="EMBL/GenBank/DDBJ databases">
        <authorList>
            <person name="Smith D.R."/>
            <person name="Robison K."/>
        </authorList>
    </citation>
    <scope>NUCLEOTIDE SEQUENCE [GENOMIC DNA]</scope>
</reference>
<reference key="2">
    <citation type="journal article" date="2001" name="Nature">
        <title>Massive gene decay in the leprosy bacillus.</title>
        <authorList>
            <person name="Cole S.T."/>
            <person name="Eiglmeier K."/>
            <person name="Parkhill J."/>
            <person name="James K.D."/>
            <person name="Thomson N.R."/>
            <person name="Wheeler P.R."/>
            <person name="Honore N."/>
            <person name="Garnier T."/>
            <person name="Churcher C.M."/>
            <person name="Harris D.E."/>
            <person name="Mungall K.L."/>
            <person name="Basham D."/>
            <person name="Brown D."/>
            <person name="Chillingworth T."/>
            <person name="Connor R."/>
            <person name="Davies R.M."/>
            <person name="Devlin K."/>
            <person name="Duthoy S."/>
            <person name="Feltwell T."/>
            <person name="Fraser A."/>
            <person name="Hamlin N."/>
            <person name="Holroyd S."/>
            <person name="Hornsby T."/>
            <person name="Jagels K."/>
            <person name="Lacroix C."/>
            <person name="Maclean J."/>
            <person name="Moule S."/>
            <person name="Murphy L.D."/>
            <person name="Oliver K."/>
            <person name="Quail M.A."/>
            <person name="Rajandream M.A."/>
            <person name="Rutherford K.M."/>
            <person name="Rutter S."/>
            <person name="Seeger K."/>
            <person name="Simon S."/>
            <person name="Simmonds M."/>
            <person name="Skelton J."/>
            <person name="Squares R."/>
            <person name="Squares S."/>
            <person name="Stevens K."/>
            <person name="Taylor K."/>
            <person name="Whitehead S."/>
            <person name="Woodward J.R."/>
            <person name="Barrell B.G."/>
        </authorList>
    </citation>
    <scope>NUCLEOTIDE SEQUENCE [LARGE SCALE GENOMIC DNA]</scope>
    <source>
        <strain>TN</strain>
    </source>
</reference>